<keyword id="KW-0963">Cytoplasm</keyword>
<keyword id="KW-0210">Decarboxylase</keyword>
<keyword id="KW-0456">Lyase</keyword>
<keyword id="KW-0627">Porphyrin biosynthesis</keyword>
<proteinExistence type="inferred from homology"/>
<sequence length="339" mass="38463">MIFIDACFRKETPYTPIWMMRQAGRYLSEYQESRKKAGSFLELCKNSDLATEVTLQPVEILGVDAAILFSDILVVPLEMGLNLEFIPKKGPHFLETITDLKSVESLKVGAYKQLNYVYDTISQTRQKLSKEKALIGFCGSPWTLATYMIEGEGSKSYAKSKKMLYSEPEVLKALLEKLSLELIEYLSLQIQAGVNAVMIFDSWASALEKEAYLEFSWDYLKKISKELKKRYAHIPVILFPKGIGAYLDSIDGEFDVFGVDWGTPLEVAKKILGDKYVLHGNLEPTRLYDKNALEEGVEKILKVMGNQGHIFNLGHGMLPDLPRENAKYLVQLVHAKTRR</sequence>
<organism>
    <name type="scientific">Helicobacter pylori (strain P12)</name>
    <dbReference type="NCBI Taxonomy" id="570508"/>
    <lineage>
        <taxon>Bacteria</taxon>
        <taxon>Pseudomonadati</taxon>
        <taxon>Campylobacterota</taxon>
        <taxon>Epsilonproteobacteria</taxon>
        <taxon>Campylobacterales</taxon>
        <taxon>Helicobacteraceae</taxon>
        <taxon>Helicobacter</taxon>
    </lineage>
</organism>
<evidence type="ECO:0000255" key="1">
    <source>
        <dbReference type="HAMAP-Rule" id="MF_00218"/>
    </source>
</evidence>
<feature type="chain" id="PRO_1000099997" description="Uroporphyrinogen decarboxylase">
    <location>
        <begin position="1"/>
        <end position="339"/>
    </location>
</feature>
<feature type="binding site" evidence="1">
    <location>
        <begin position="21"/>
        <end position="25"/>
    </location>
    <ligand>
        <name>substrate</name>
    </ligand>
</feature>
<feature type="binding site" evidence="1">
    <location>
        <position position="71"/>
    </location>
    <ligand>
        <name>substrate</name>
    </ligand>
</feature>
<feature type="binding site" evidence="1">
    <location>
        <position position="147"/>
    </location>
    <ligand>
        <name>substrate</name>
    </ligand>
</feature>
<feature type="binding site" evidence="1">
    <location>
        <position position="202"/>
    </location>
    <ligand>
        <name>substrate</name>
    </ligand>
</feature>
<feature type="binding site" evidence="1">
    <location>
        <position position="315"/>
    </location>
    <ligand>
        <name>substrate</name>
    </ligand>
</feature>
<feature type="site" description="Transition state stabilizer" evidence="1">
    <location>
        <position position="71"/>
    </location>
</feature>
<dbReference type="EC" id="4.1.1.37" evidence="1"/>
<dbReference type="EMBL" id="CP001217">
    <property type="protein sequence ID" value="ACJ07765.1"/>
    <property type="molecule type" value="Genomic_DNA"/>
</dbReference>
<dbReference type="SMR" id="B6JLI7"/>
<dbReference type="KEGG" id="hpp:HPP12_0612"/>
<dbReference type="HOGENOM" id="CLU_040933_0_0_7"/>
<dbReference type="UniPathway" id="UPA00251">
    <property type="reaction ID" value="UER00321"/>
</dbReference>
<dbReference type="Proteomes" id="UP000008198">
    <property type="component" value="Chromosome"/>
</dbReference>
<dbReference type="GO" id="GO:0005829">
    <property type="term" value="C:cytosol"/>
    <property type="evidence" value="ECO:0007669"/>
    <property type="project" value="TreeGrafter"/>
</dbReference>
<dbReference type="GO" id="GO:0004853">
    <property type="term" value="F:uroporphyrinogen decarboxylase activity"/>
    <property type="evidence" value="ECO:0007669"/>
    <property type="project" value="UniProtKB-UniRule"/>
</dbReference>
<dbReference type="GO" id="GO:0019353">
    <property type="term" value="P:protoporphyrinogen IX biosynthetic process from glutamate"/>
    <property type="evidence" value="ECO:0007669"/>
    <property type="project" value="TreeGrafter"/>
</dbReference>
<dbReference type="CDD" id="cd00717">
    <property type="entry name" value="URO-D"/>
    <property type="match status" value="1"/>
</dbReference>
<dbReference type="FunFam" id="3.20.20.210:FF:000007">
    <property type="entry name" value="Uroporphyrinogen decarboxylase"/>
    <property type="match status" value="1"/>
</dbReference>
<dbReference type="Gene3D" id="3.20.20.210">
    <property type="match status" value="1"/>
</dbReference>
<dbReference type="HAMAP" id="MF_00218">
    <property type="entry name" value="URO_D"/>
    <property type="match status" value="1"/>
</dbReference>
<dbReference type="InterPro" id="IPR038071">
    <property type="entry name" value="UROD/MetE-like_sf"/>
</dbReference>
<dbReference type="InterPro" id="IPR006361">
    <property type="entry name" value="Uroporphyrinogen_deCO2ase_HemE"/>
</dbReference>
<dbReference type="InterPro" id="IPR000257">
    <property type="entry name" value="Uroporphyrinogen_deCOase"/>
</dbReference>
<dbReference type="NCBIfam" id="TIGR01464">
    <property type="entry name" value="hemE"/>
    <property type="match status" value="1"/>
</dbReference>
<dbReference type="PANTHER" id="PTHR21091">
    <property type="entry name" value="METHYLTETRAHYDROFOLATE:HOMOCYSTEINE METHYLTRANSFERASE RELATED"/>
    <property type="match status" value="1"/>
</dbReference>
<dbReference type="PANTHER" id="PTHR21091:SF169">
    <property type="entry name" value="UROPORPHYRINOGEN DECARBOXYLASE"/>
    <property type="match status" value="1"/>
</dbReference>
<dbReference type="Pfam" id="PF01208">
    <property type="entry name" value="URO-D"/>
    <property type="match status" value="1"/>
</dbReference>
<dbReference type="SUPFAM" id="SSF51726">
    <property type="entry name" value="UROD/MetE-like"/>
    <property type="match status" value="1"/>
</dbReference>
<dbReference type="PROSITE" id="PS00906">
    <property type="entry name" value="UROD_1"/>
    <property type="match status" value="1"/>
</dbReference>
<dbReference type="PROSITE" id="PS00907">
    <property type="entry name" value="UROD_2"/>
    <property type="match status" value="1"/>
</dbReference>
<comment type="function">
    <text evidence="1">Catalyzes the decarboxylation of four acetate groups of uroporphyrinogen-III to yield coproporphyrinogen-III.</text>
</comment>
<comment type="catalytic activity">
    <reaction evidence="1">
        <text>uroporphyrinogen III + 4 H(+) = coproporphyrinogen III + 4 CO2</text>
        <dbReference type="Rhea" id="RHEA:19865"/>
        <dbReference type="ChEBI" id="CHEBI:15378"/>
        <dbReference type="ChEBI" id="CHEBI:16526"/>
        <dbReference type="ChEBI" id="CHEBI:57308"/>
        <dbReference type="ChEBI" id="CHEBI:57309"/>
        <dbReference type="EC" id="4.1.1.37"/>
    </reaction>
</comment>
<comment type="pathway">
    <text evidence="1">Porphyrin-containing compound metabolism; protoporphyrin-IX biosynthesis; coproporphyrinogen-III from 5-aminolevulinate: step 4/4.</text>
</comment>
<comment type="subunit">
    <text evidence="1">Homodimer.</text>
</comment>
<comment type="subcellular location">
    <subcellularLocation>
        <location evidence="1">Cytoplasm</location>
    </subcellularLocation>
</comment>
<comment type="similarity">
    <text evidence="1">Belongs to the uroporphyrinogen decarboxylase family.</text>
</comment>
<gene>
    <name evidence="1" type="primary">hemE</name>
    <name type="ordered locus">HPP12_0612</name>
</gene>
<protein>
    <recommendedName>
        <fullName evidence="1">Uroporphyrinogen decarboxylase</fullName>
        <shortName evidence="1">UPD</shortName>
        <shortName evidence="1">URO-D</shortName>
        <ecNumber evidence="1">4.1.1.37</ecNumber>
    </recommendedName>
</protein>
<accession>B6JLI7</accession>
<reference key="1">
    <citation type="submission" date="2008-10" db="EMBL/GenBank/DDBJ databases">
        <title>The complete genome sequence of Helicobacter pylori strain P12.</title>
        <authorList>
            <person name="Fischer W."/>
            <person name="Windhager L."/>
            <person name="Karnholz A."/>
            <person name="Zeiller M."/>
            <person name="Zimmer R."/>
            <person name="Haas R."/>
        </authorList>
    </citation>
    <scope>NUCLEOTIDE SEQUENCE [LARGE SCALE GENOMIC DNA]</scope>
    <source>
        <strain>P12</strain>
    </source>
</reference>
<name>DCUP_HELP2</name>